<name>MOAC_SALHS</name>
<protein>
    <recommendedName>
        <fullName evidence="1">Cyclic pyranopterin monophosphate synthase</fullName>
        <ecNumber evidence="1">4.6.1.17</ecNumber>
    </recommendedName>
    <alternativeName>
        <fullName evidence="1">Molybdenum cofactor biosynthesis protein C</fullName>
    </alternativeName>
</protein>
<feature type="chain" id="PRO_1000139293" description="Cyclic pyranopterin monophosphate synthase">
    <location>
        <begin position="1"/>
        <end position="161"/>
    </location>
</feature>
<feature type="active site" evidence="1">
    <location>
        <position position="128"/>
    </location>
</feature>
<feature type="binding site" evidence="1">
    <location>
        <begin position="75"/>
        <end position="77"/>
    </location>
    <ligand>
        <name>substrate</name>
    </ligand>
</feature>
<feature type="binding site" evidence="1">
    <location>
        <begin position="113"/>
        <end position="114"/>
    </location>
    <ligand>
        <name>substrate</name>
    </ligand>
</feature>
<gene>
    <name evidence="1" type="primary">moaC</name>
    <name type="ordered locus">SeHA_C0930</name>
</gene>
<dbReference type="EC" id="4.6.1.17" evidence="1"/>
<dbReference type="EMBL" id="CP001120">
    <property type="protein sequence ID" value="ACF69719.1"/>
    <property type="molecule type" value="Genomic_DNA"/>
</dbReference>
<dbReference type="RefSeq" id="WP_000080894.1">
    <property type="nucleotide sequence ID" value="NC_011083.1"/>
</dbReference>
<dbReference type="SMR" id="B4TC57"/>
<dbReference type="KEGG" id="seh:SeHA_C0930"/>
<dbReference type="HOGENOM" id="CLU_074693_1_1_6"/>
<dbReference type="UniPathway" id="UPA00344"/>
<dbReference type="Proteomes" id="UP000001866">
    <property type="component" value="Chromosome"/>
</dbReference>
<dbReference type="GO" id="GO:0061799">
    <property type="term" value="F:cyclic pyranopterin monophosphate synthase activity"/>
    <property type="evidence" value="ECO:0007669"/>
    <property type="project" value="UniProtKB-UniRule"/>
</dbReference>
<dbReference type="GO" id="GO:0006777">
    <property type="term" value="P:Mo-molybdopterin cofactor biosynthetic process"/>
    <property type="evidence" value="ECO:0007669"/>
    <property type="project" value="UniProtKB-UniRule"/>
</dbReference>
<dbReference type="CDD" id="cd01420">
    <property type="entry name" value="MoaC_PE"/>
    <property type="match status" value="1"/>
</dbReference>
<dbReference type="FunFam" id="3.30.70.640:FF:000001">
    <property type="entry name" value="Cyclic pyranopterin monophosphate synthase"/>
    <property type="match status" value="1"/>
</dbReference>
<dbReference type="Gene3D" id="3.30.70.640">
    <property type="entry name" value="Molybdopterin cofactor biosynthesis C (MoaC) domain"/>
    <property type="match status" value="1"/>
</dbReference>
<dbReference type="HAMAP" id="MF_01224_B">
    <property type="entry name" value="MoaC_B"/>
    <property type="match status" value="1"/>
</dbReference>
<dbReference type="InterPro" id="IPR023045">
    <property type="entry name" value="MoaC"/>
</dbReference>
<dbReference type="InterPro" id="IPR047594">
    <property type="entry name" value="MoaC_bact/euk"/>
</dbReference>
<dbReference type="InterPro" id="IPR036522">
    <property type="entry name" value="MoaC_sf"/>
</dbReference>
<dbReference type="InterPro" id="IPR050105">
    <property type="entry name" value="MoCo_biosynth_MoaA/MoaC"/>
</dbReference>
<dbReference type="InterPro" id="IPR002820">
    <property type="entry name" value="Mopterin_CF_biosynth-C_dom"/>
</dbReference>
<dbReference type="NCBIfam" id="TIGR00581">
    <property type="entry name" value="moaC"/>
    <property type="match status" value="1"/>
</dbReference>
<dbReference type="NCBIfam" id="NF006870">
    <property type="entry name" value="PRK09364.1"/>
    <property type="match status" value="1"/>
</dbReference>
<dbReference type="PANTHER" id="PTHR22960">
    <property type="entry name" value="MOLYBDOPTERIN COFACTOR SYNTHESIS PROTEIN A"/>
    <property type="match status" value="1"/>
</dbReference>
<dbReference type="Pfam" id="PF01967">
    <property type="entry name" value="MoaC"/>
    <property type="match status" value="1"/>
</dbReference>
<dbReference type="SUPFAM" id="SSF55040">
    <property type="entry name" value="Molybdenum cofactor biosynthesis protein C, MoaC"/>
    <property type="match status" value="1"/>
</dbReference>
<evidence type="ECO:0000255" key="1">
    <source>
        <dbReference type="HAMAP-Rule" id="MF_01224"/>
    </source>
</evidence>
<organism>
    <name type="scientific">Salmonella heidelberg (strain SL476)</name>
    <dbReference type="NCBI Taxonomy" id="454169"/>
    <lineage>
        <taxon>Bacteria</taxon>
        <taxon>Pseudomonadati</taxon>
        <taxon>Pseudomonadota</taxon>
        <taxon>Gammaproteobacteria</taxon>
        <taxon>Enterobacterales</taxon>
        <taxon>Enterobacteriaceae</taxon>
        <taxon>Salmonella</taxon>
    </lineage>
</organism>
<proteinExistence type="inferred from homology"/>
<comment type="function">
    <text evidence="1">Catalyzes the conversion of (8S)-3',8-cyclo-7,8-dihydroguanosine 5'-triphosphate to cyclic pyranopterin monophosphate (cPMP).</text>
</comment>
<comment type="catalytic activity">
    <reaction evidence="1">
        <text>(8S)-3',8-cyclo-7,8-dihydroguanosine 5'-triphosphate = cyclic pyranopterin phosphate + diphosphate</text>
        <dbReference type="Rhea" id="RHEA:49580"/>
        <dbReference type="ChEBI" id="CHEBI:33019"/>
        <dbReference type="ChEBI" id="CHEBI:59648"/>
        <dbReference type="ChEBI" id="CHEBI:131766"/>
        <dbReference type="EC" id="4.6.1.17"/>
    </reaction>
</comment>
<comment type="pathway">
    <text evidence="1">Cofactor biosynthesis; molybdopterin biosynthesis.</text>
</comment>
<comment type="subunit">
    <text evidence="1">Homohexamer; trimer of dimers.</text>
</comment>
<comment type="similarity">
    <text evidence="1">Belongs to the MoaC family.</text>
</comment>
<keyword id="KW-0456">Lyase</keyword>
<keyword id="KW-0501">Molybdenum cofactor biosynthesis</keyword>
<reference key="1">
    <citation type="journal article" date="2011" name="J. Bacteriol.">
        <title>Comparative genomics of 28 Salmonella enterica isolates: evidence for CRISPR-mediated adaptive sublineage evolution.</title>
        <authorList>
            <person name="Fricke W.F."/>
            <person name="Mammel M.K."/>
            <person name="McDermott P.F."/>
            <person name="Tartera C."/>
            <person name="White D.G."/>
            <person name="Leclerc J.E."/>
            <person name="Ravel J."/>
            <person name="Cebula T.A."/>
        </authorList>
    </citation>
    <scope>NUCLEOTIDE SEQUENCE [LARGE SCALE GENOMIC DNA]</scope>
    <source>
        <strain>SL476</strain>
    </source>
</reference>
<accession>B4TC57</accession>
<sequence length="161" mass="17443">MSQLTHINAAGEAHMVDVSAKAETVREARAEAFVTMRSETLAMIVDGKHHKGDVFATARIAGIQAAKRTWELIPLCHPLLLSKVEIQLQAEPEHNRVRIESLCRLTGKTGVEMEALTAASVAALTIYDMCKAVQKDMVIGPVRLLAKSGGKSGDFKVDAHD</sequence>